<dbReference type="EC" id="3.1.1.96" evidence="1"/>
<dbReference type="EMBL" id="BX950229">
    <property type="protein sequence ID" value="CAF30546.1"/>
    <property type="molecule type" value="Genomic_DNA"/>
</dbReference>
<dbReference type="RefSeq" id="WP_011170934.1">
    <property type="nucleotide sequence ID" value="NC_005791.1"/>
</dbReference>
<dbReference type="SMR" id="Q6LYK1"/>
<dbReference type="STRING" id="267377.MMP0990"/>
<dbReference type="EnsemblBacteria" id="CAF30546">
    <property type="protein sequence ID" value="CAF30546"/>
    <property type="gene ID" value="MMP0990"/>
</dbReference>
<dbReference type="GeneID" id="2761585"/>
<dbReference type="KEGG" id="mmp:MMP0990"/>
<dbReference type="PATRIC" id="fig|267377.15.peg.1018"/>
<dbReference type="eggNOG" id="arCOG01616">
    <property type="taxonomic scope" value="Archaea"/>
</dbReference>
<dbReference type="HOGENOM" id="CLU_056464_1_0_2"/>
<dbReference type="OrthoDB" id="9863at2157"/>
<dbReference type="Proteomes" id="UP000000590">
    <property type="component" value="Chromosome"/>
</dbReference>
<dbReference type="GO" id="GO:0051499">
    <property type="term" value="F:D-aminoacyl-tRNA deacylase activity"/>
    <property type="evidence" value="ECO:0007669"/>
    <property type="project" value="UniProtKB-UniRule"/>
</dbReference>
<dbReference type="GO" id="GO:0008270">
    <property type="term" value="F:zinc ion binding"/>
    <property type="evidence" value="ECO:0007669"/>
    <property type="project" value="UniProtKB-UniRule"/>
</dbReference>
<dbReference type="GO" id="GO:0019478">
    <property type="term" value="P:D-amino acid catabolic process"/>
    <property type="evidence" value="ECO:0007669"/>
    <property type="project" value="UniProtKB-UniRule"/>
</dbReference>
<dbReference type="Gene3D" id="3.40.50.10700">
    <property type="entry name" value="AF0625-like"/>
    <property type="match status" value="1"/>
</dbReference>
<dbReference type="Gene3D" id="3.40.630.50">
    <property type="entry name" value="AF0625-like"/>
    <property type="match status" value="1"/>
</dbReference>
<dbReference type="HAMAP" id="MF_00562">
    <property type="entry name" value="Deacylase_DtdA"/>
    <property type="match status" value="1"/>
</dbReference>
<dbReference type="InterPro" id="IPR018033">
    <property type="entry name" value="Deacylase_DtdA_archaea"/>
</dbReference>
<dbReference type="InterPro" id="IPR007508">
    <property type="entry name" value="DtdA"/>
</dbReference>
<dbReference type="NCBIfam" id="NF003071">
    <property type="entry name" value="PRK03995.1-3"/>
    <property type="match status" value="1"/>
</dbReference>
<dbReference type="PANTHER" id="PTHR34667">
    <property type="entry name" value="D-AMINOACYL-TRNA DEACYLASE"/>
    <property type="match status" value="1"/>
</dbReference>
<dbReference type="PANTHER" id="PTHR34667:SF1">
    <property type="entry name" value="D-AMINOACYL-TRNA DEACYLASE"/>
    <property type="match status" value="1"/>
</dbReference>
<dbReference type="Pfam" id="PF04414">
    <property type="entry name" value="tRNA_deacylase"/>
    <property type="match status" value="1"/>
</dbReference>
<dbReference type="PIRSF" id="PIRSF016210">
    <property type="entry name" value="UCP016210"/>
    <property type="match status" value="1"/>
</dbReference>
<dbReference type="SUPFAM" id="SSF142535">
    <property type="entry name" value="AF0625-like"/>
    <property type="match status" value="1"/>
</dbReference>
<reference key="1">
    <citation type="journal article" date="2004" name="J. Bacteriol.">
        <title>Complete genome sequence of the genetically tractable hydrogenotrophic methanogen Methanococcus maripaludis.</title>
        <authorList>
            <person name="Hendrickson E.L."/>
            <person name="Kaul R."/>
            <person name="Zhou Y."/>
            <person name="Bovee D."/>
            <person name="Chapman P."/>
            <person name="Chung J."/>
            <person name="Conway de Macario E."/>
            <person name="Dodsworth J.A."/>
            <person name="Gillett W."/>
            <person name="Graham D.E."/>
            <person name="Hackett M."/>
            <person name="Haydock A.K."/>
            <person name="Kang A."/>
            <person name="Land M.L."/>
            <person name="Levy R."/>
            <person name="Lie T.J."/>
            <person name="Major T.A."/>
            <person name="Moore B.C."/>
            <person name="Porat I."/>
            <person name="Palmeiri A."/>
            <person name="Rouse G."/>
            <person name="Saenphimmachak C."/>
            <person name="Soell D."/>
            <person name="Van Dien S."/>
            <person name="Wang T."/>
            <person name="Whitman W.B."/>
            <person name="Xia Q."/>
            <person name="Zhang Y."/>
            <person name="Larimer F.W."/>
            <person name="Olson M.V."/>
            <person name="Leigh J.A."/>
        </authorList>
    </citation>
    <scope>NUCLEOTIDE SEQUENCE [LARGE SCALE GENOMIC DNA]</scope>
    <source>
        <strain>DSM 14266 / JCM 13030 / NBRC 101832 / S2 / LL</strain>
    </source>
</reference>
<sequence>MDYLLISSETDPASQNLKKHVENYGYSVFNIEKKSTQTNYSEFPQSEMYIFLSKHASESKKPTLTVHTPGNLTDDNSHGGNPEEISPCNPVFNTLMLQNMNKYNEMEEYKELGFDVSFEVLHHGPTDLKAPSAFVEIGSSEEQWQIDDAAEIITNSLIDTLNSIQNSEYDEKEKIIGIGGGHYSPKFTKLALREEYYVGYLTPKHAKLSENILNQLTSKQEFDFIGIDWKGLYGEDKRKYVEFFDENDISWQRV</sequence>
<keyword id="KW-0378">Hydrolase</keyword>
<keyword id="KW-0479">Metal-binding</keyword>
<keyword id="KW-1185">Reference proteome</keyword>
<keyword id="KW-0862">Zinc</keyword>
<protein>
    <recommendedName>
        <fullName evidence="1">D-aminoacyl-tRNA deacylase</fullName>
        <ecNumber evidence="1">3.1.1.96</ecNumber>
    </recommendedName>
    <alternativeName>
        <fullName>D-tyrosyl-tRNA(Tyr) deacylase</fullName>
    </alternativeName>
</protein>
<feature type="chain" id="PRO_0000345217" description="D-aminoacyl-tRNA deacylase">
    <location>
        <begin position="1"/>
        <end position="254"/>
    </location>
</feature>
<feature type="region of interest" description="Disordered" evidence="2">
    <location>
        <begin position="61"/>
        <end position="82"/>
    </location>
</feature>
<feature type="compositionally biased region" description="Polar residues" evidence="2">
    <location>
        <begin position="65"/>
        <end position="74"/>
    </location>
</feature>
<comment type="function">
    <text evidence="1">D-aminoacyl-tRNA deacylase with broad substrate specificity. By recycling D-aminoacyl-tRNA to D-amino acids and free tRNA molecules, this enzyme counteracts the toxicity associated with the formation of D-aminoacyl-tRNA entities in vivo.</text>
</comment>
<comment type="catalytic activity">
    <reaction evidence="1">
        <text>a D-aminoacyl-tRNA + H2O = a tRNA + a D-alpha-amino acid + H(+)</text>
        <dbReference type="Rhea" id="RHEA:13953"/>
        <dbReference type="Rhea" id="RHEA-COMP:10123"/>
        <dbReference type="Rhea" id="RHEA-COMP:10124"/>
        <dbReference type="ChEBI" id="CHEBI:15377"/>
        <dbReference type="ChEBI" id="CHEBI:15378"/>
        <dbReference type="ChEBI" id="CHEBI:59871"/>
        <dbReference type="ChEBI" id="CHEBI:78442"/>
        <dbReference type="ChEBI" id="CHEBI:79333"/>
        <dbReference type="EC" id="3.1.1.96"/>
    </reaction>
</comment>
<comment type="catalytic activity">
    <reaction evidence="1">
        <text>glycyl-tRNA(Ala) + H2O = tRNA(Ala) + glycine + H(+)</text>
        <dbReference type="Rhea" id="RHEA:53744"/>
        <dbReference type="Rhea" id="RHEA-COMP:9657"/>
        <dbReference type="Rhea" id="RHEA-COMP:13640"/>
        <dbReference type="ChEBI" id="CHEBI:15377"/>
        <dbReference type="ChEBI" id="CHEBI:15378"/>
        <dbReference type="ChEBI" id="CHEBI:57305"/>
        <dbReference type="ChEBI" id="CHEBI:78442"/>
        <dbReference type="ChEBI" id="CHEBI:78522"/>
        <dbReference type="EC" id="3.1.1.96"/>
    </reaction>
</comment>
<comment type="cofactor">
    <cofactor evidence="1">
        <name>Zn(2+)</name>
        <dbReference type="ChEBI" id="CHEBI:29105"/>
    </cofactor>
    <text evidence="1">Binds 2 Zn(2+) ions per subunit.</text>
</comment>
<comment type="subunit">
    <text evidence="1">Monomer.</text>
</comment>
<comment type="similarity">
    <text evidence="1">Belongs to the DtdA deacylase family.</text>
</comment>
<gene>
    <name evidence="1" type="primary">dtdA</name>
    <name type="ordered locus">MMP0990</name>
</gene>
<name>DTDA_METMP</name>
<evidence type="ECO:0000255" key="1">
    <source>
        <dbReference type="HAMAP-Rule" id="MF_00562"/>
    </source>
</evidence>
<evidence type="ECO:0000256" key="2">
    <source>
        <dbReference type="SAM" id="MobiDB-lite"/>
    </source>
</evidence>
<organism>
    <name type="scientific">Methanococcus maripaludis (strain DSM 14266 / JCM 13030 / NBRC 101832 / S2 / LL)</name>
    <dbReference type="NCBI Taxonomy" id="267377"/>
    <lineage>
        <taxon>Archaea</taxon>
        <taxon>Methanobacteriati</taxon>
        <taxon>Methanobacteriota</taxon>
        <taxon>Methanomada group</taxon>
        <taxon>Methanococci</taxon>
        <taxon>Methanococcales</taxon>
        <taxon>Methanococcaceae</taxon>
        <taxon>Methanococcus</taxon>
    </lineage>
</organism>
<proteinExistence type="inferred from homology"/>
<accession>Q6LYK1</accession>